<reference key="1">
    <citation type="submission" date="2005-09" db="EMBL/GenBank/DDBJ databases">
        <title>Complete sequence of chromosome 1 of Rhodobacter sphaeroides 2.4.1.</title>
        <authorList>
            <person name="Copeland A."/>
            <person name="Lucas S."/>
            <person name="Lapidus A."/>
            <person name="Barry K."/>
            <person name="Detter J.C."/>
            <person name="Glavina T."/>
            <person name="Hammon N."/>
            <person name="Israni S."/>
            <person name="Pitluck S."/>
            <person name="Richardson P."/>
            <person name="Mackenzie C."/>
            <person name="Choudhary M."/>
            <person name="Larimer F."/>
            <person name="Hauser L.J."/>
            <person name="Land M."/>
            <person name="Donohue T.J."/>
            <person name="Kaplan S."/>
        </authorList>
    </citation>
    <scope>NUCLEOTIDE SEQUENCE [LARGE SCALE GENOMIC DNA]</scope>
    <source>
        <strain>ATCC 17023 / DSM 158 / JCM 6121 / CCUG 31486 / LMG 2827 / NBRC 12203 / NCIMB 8253 / ATH 2.4.1.</strain>
    </source>
</reference>
<evidence type="ECO:0000255" key="1">
    <source>
        <dbReference type="HAMAP-Rule" id="MF_01309"/>
    </source>
</evidence>
<evidence type="ECO:0000256" key="2">
    <source>
        <dbReference type="SAM" id="MobiDB-lite"/>
    </source>
</evidence>
<evidence type="ECO:0000305" key="3"/>
<protein>
    <recommendedName>
        <fullName evidence="1">Small ribosomal subunit protein uS3</fullName>
    </recommendedName>
    <alternativeName>
        <fullName evidence="3">30S ribosomal protein S3</fullName>
    </alternativeName>
</protein>
<keyword id="KW-1185">Reference proteome</keyword>
<keyword id="KW-0687">Ribonucleoprotein</keyword>
<keyword id="KW-0689">Ribosomal protein</keyword>
<keyword id="KW-0694">RNA-binding</keyword>
<keyword id="KW-0699">rRNA-binding</keyword>
<gene>
    <name evidence="1" type="primary">rpsC</name>
    <name type="ordered locus">RHOS4_03000</name>
    <name type="ORF">RSP_1722</name>
</gene>
<name>RS3_CERS4</name>
<accession>Q3J5R6</accession>
<dbReference type="EMBL" id="CP000143">
    <property type="protein sequence ID" value="ABA77868.1"/>
    <property type="molecule type" value="Genomic_DNA"/>
</dbReference>
<dbReference type="RefSeq" id="WP_002722498.1">
    <property type="nucleotide sequence ID" value="NZ_CP030271.1"/>
</dbReference>
<dbReference type="RefSeq" id="YP_351769.1">
    <property type="nucleotide sequence ID" value="NC_007493.2"/>
</dbReference>
<dbReference type="SMR" id="Q3J5R6"/>
<dbReference type="STRING" id="272943.RSP_1722"/>
<dbReference type="EnsemblBacteria" id="ABA77868">
    <property type="protein sequence ID" value="ABA77868"/>
    <property type="gene ID" value="RSP_1722"/>
</dbReference>
<dbReference type="GeneID" id="67445506"/>
<dbReference type="KEGG" id="rsp:RSP_1722"/>
<dbReference type="PATRIC" id="fig|272943.9.peg.599"/>
<dbReference type="eggNOG" id="COG0092">
    <property type="taxonomic scope" value="Bacteria"/>
</dbReference>
<dbReference type="OrthoDB" id="9806396at2"/>
<dbReference type="PhylomeDB" id="Q3J5R6"/>
<dbReference type="Proteomes" id="UP000002703">
    <property type="component" value="Chromosome 1"/>
</dbReference>
<dbReference type="GO" id="GO:0022627">
    <property type="term" value="C:cytosolic small ribosomal subunit"/>
    <property type="evidence" value="ECO:0007669"/>
    <property type="project" value="TreeGrafter"/>
</dbReference>
<dbReference type="GO" id="GO:0003729">
    <property type="term" value="F:mRNA binding"/>
    <property type="evidence" value="ECO:0007669"/>
    <property type="project" value="UniProtKB-UniRule"/>
</dbReference>
<dbReference type="GO" id="GO:0019843">
    <property type="term" value="F:rRNA binding"/>
    <property type="evidence" value="ECO:0007669"/>
    <property type="project" value="UniProtKB-UniRule"/>
</dbReference>
<dbReference type="GO" id="GO:0003735">
    <property type="term" value="F:structural constituent of ribosome"/>
    <property type="evidence" value="ECO:0007669"/>
    <property type="project" value="InterPro"/>
</dbReference>
<dbReference type="GO" id="GO:0006412">
    <property type="term" value="P:translation"/>
    <property type="evidence" value="ECO:0007669"/>
    <property type="project" value="UniProtKB-UniRule"/>
</dbReference>
<dbReference type="CDD" id="cd02412">
    <property type="entry name" value="KH-II_30S_S3"/>
    <property type="match status" value="1"/>
</dbReference>
<dbReference type="FunFam" id="3.30.1140.32:FF:000001">
    <property type="entry name" value="30S ribosomal protein S3"/>
    <property type="match status" value="1"/>
</dbReference>
<dbReference type="FunFam" id="3.30.300.20:FF:000001">
    <property type="entry name" value="30S ribosomal protein S3"/>
    <property type="match status" value="1"/>
</dbReference>
<dbReference type="Gene3D" id="3.30.300.20">
    <property type="match status" value="1"/>
</dbReference>
<dbReference type="Gene3D" id="3.30.1140.32">
    <property type="entry name" value="Ribosomal protein S3, C-terminal domain"/>
    <property type="match status" value="1"/>
</dbReference>
<dbReference type="HAMAP" id="MF_01309_B">
    <property type="entry name" value="Ribosomal_uS3_B"/>
    <property type="match status" value="1"/>
</dbReference>
<dbReference type="InterPro" id="IPR004087">
    <property type="entry name" value="KH_dom"/>
</dbReference>
<dbReference type="InterPro" id="IPR015946">
    <property type="entry name" value="KH_dom-like_a/b"/>
</dbReference>
<dbReference type="InterPro" id="IPR004044">
    <property type="entry name" value="KH_dom_type_2"/>
</dbReference>
<dbReference type="InterPro" id="IPR009019">
    <property type="entry name" value="KH_sf_prok-type"/>
</dbReference>
<dbReference type="InterPro" id="IPR036419">
    <property type="entry name" value="Ribosomal_S3_C_sf"/>
</dbReference>
<dbReference type="InterPro" id="IPR005704">
    <property type="entry name" value="Ribosomal_uS3_bac-typ"/>
</dbReference>
<dbReference type="InterPro" id="IPR001351">
    <property type="entry name" value="Ribosomal_uS3_C"/>
</dbReference>
<dbReference type="InterPro" id="IPR018280">
    <property type="entry name" value="Ribosomal_uS3_CS"/>
</dbReference>
<dbReference type="NCBIfam" id="TIGR01009">
    <property type="entry name" value="rpsC_bact"/>
    <property type="match status" value="1"/>
</dbReference>
<dbReference type="PANTHER" id="PTHR11760">
    <property type="entry name" value="30S/40S RIBOSOMAL PROTEIN S3"/>
    <property type="match status" value="1"/>
</dbReference>
<dbReference type="PANTHER" id="PTHR11760:SF19">
    <property type="entry name" value="SMALL RIBOSOMAL SUBUNIT PROTEIN US3C"/>
    <property type="match status" value="1"/>
</dbReference>
<dbReference type="Pfam" id="PF07650">
    <property type="entry name" value="KH_2"/>
    <property type="match status" value="1"/>
</dbReference>
<dbReference type="Pfam" id="PF00189">
    <property type="entry name" value="Ribosomal_S3_C"/>
    <property type="match status" value="1"/>
</dbReference>
<dbReference type="SMART" id="SM00322">
    <property type="entry name" value="KH"/>
    <property type="match status" value="1"/>
</dbReference>
<dbReference type="SUPFAM" id="SSF54814">
    <property type="entry name" value="Prokaryotic type KH domain (KH-domain type II)"/>
    <property type="match status" value="1"/>
</dbReference>
<dbReference type="SUPFAM" id="SSF54821">
    <property type="entry name" value="Ribosomal protein S3 C-terminal domain"/>
    <property type="match status" value="1"/>
</dbReference>
<dbReference type="PROSITE" id="PS50823">
    <property type="entry name" value="KH_TYPE_2"/>
    <property type="match status" value="1"/>
</dbReference>
<dbReference type="PROSITE" id="PS00548">
    <property type="entry name" value="RIBOSOMAL_S3"/>
    <property type="match status" value="1"/>
</dbReference>
<organism>
    <name type="scientific">Cereibacter sphaeroides (strain ATCC 17023 / DSM 158 / JCM 6121 / CCUG 31486 / LMG 2827 / NBRC 12203 / NCIMB 8253 / ATH 2.4.1.)</name>
    <name type="common">Rhodobacter sphaeroides</name>
    <dbReference type="NCBI Taxonomy" id="272943"/>
    <lineage>
        <taxon>Bacteria</taxon>
        <taxon>Pseudomonadati</taxon>
        <taxon>Pseudomonadota</taxon>
        <taxon>Alphaproteobacteria</taxon>
        <taxon>Rhodobacterales</taxon>
        <taxon>Paracoccaceae</taxon>
        <taxon>Cereibacter</taxon>
    </lineage>
</organism>
<sequence length="238" mass="27202">MGQKVNPIGMRLQVNRTWDSRWFAESKDYGNLLLEDLKMREFIHDYAKQAGVSKVIIERPHRKCRVTIHTARPGVIIGKKGADIETLRKKLSAFTKSELHLNIVEIRKPELDAQLVAESIAQQMERRVSFRRAMKRGVQNAMRIGALGIRVNVSGRLGGAEIARTEWYREGRVPLHTLRADIDYATSEATTPYGIIGVKVWIFKGEILEHDPQAHDRRHSEAQEGAAPRPPRRDRERA</sequence>
<proteinExistence type="inferred from homology"/>
<comment type="function">
    <text evidence="1">Binds the lower part of the 30S subunit head. Binds mRNA in the 70S ribosome, positioning it for translation.</text>
</comment>
<comment type="subunit">
    <text evidence="1">Part of the 30S ribosomal subunit. Forms a tight complex with proteins S10 and S14.</text>
</comment>
<comment type="similarity">
    <text evidence="1">Belongs to the universal ribosomal protein uS3 family.</text>
</comment>
<feature type="chain" id="PRO_0000230722" description="Small ribosomal subunit protein uS3">
    <location>
        <begin position="1"/>
        <end position="238"/>
    </location>
</feature>
<feature type="domain" description="KH type-2" evidence="1">
    <location>
        <begin position="39"/>
        <end position="107"/>
    </location>
</feature>
<feature type="region of interest" description="Disordered" evidence="2">
    <location>
        <begin position="212"/>
        <end position="238"/>
    </location>
</feature>
<feature type="compositionally biased region" description="Basic and acidic residues" evidence="2">
    <location>
        <begin position="212"/>
        <end position="222"/>
    </location>
</feature>